<organism>
    <name type="scientific">Mus musculus</name>
    <name type="common">Mouse</name>
    <dbReference type="NCBI Taxonomy" id="10090"/>
    <lineage>
        <taxon>Eukaryota</taxon>
        <taxon>Metazoa</taxon>
        <taxon>Chordata</taxon>
        <taxon>Craniata</taxon>
        <taxon>Vertebrata</taxon>
        <taxon>Euteleostomi</taxon>
        <taxon>Mammalia</taxon>
        <taxon>Eutheria</taxon>
        <taxon>Euarchontoglires</taxon>
        <taxon>Glires</taxon>
        <taxon>Rodentia</taxon>
        <taxon>Myomorpha</taxon>
        <taxon>Muroidea</taxon>
        <taxon>Muridae</taxon>
        <taxon>Murinae</taxon>
        <taxon>Mus</taxon>
        <taxon>Mus</taxon>
    </lineage>
</organism>
<feature type="chain" id="PRO_0000220695" description="Polyunsaturated fatty acid 5-lipoxygenase">
    <location>
        <begin position="1"/>
        <end position="674"/>
    </location>
</feature>
<feature type="domain" description="PLAT" evidence="3">
    <location>
        <begin position="2"/>
        <end position="118"/>
    </location>
</feature>
<feature type="domain" description="Lipoxygenase" evidence="4">
    <location>
        <begin position="119"/>
        <end position="674"/>
    </location>
</feature>
<feature type="binding site" evidence="1">
    <location>
        <position position="17"/>
    </location>
    <ligand>
        <name>Ca(2+)</name>
        <dbReference type="ChEBI" id="CHEBI:29108"/>
        <label>1</label>
        <note>structural</note>
    </ligand>
</feature>
<feature type="binding site" evidence="1">
    <location>
        <position position="18"/>
    </location>
    <ligand>
        <name>Ca(2+)</name>
        <dbReference type="ChEBI" id="CHEBI:29108"/>
        <label>2</label>
        <note>structural</note>
    </ligand>
</feature>
<feature type="binding site" evidence="1">
    <location>
        <position position="19"/>
    </location>
    <ligand>
        <name>Ca(2+)</name>
        <dbReference type="ChEBI" id="CHEBI:29108"/>
        <label>2</label>
        <note>structural</note>
    </ligand>
</feature>
<feature type="binding site" evidence="1">
    <location>
        <position position="44"/>
    </location>
    <ligand>
        <name>Ca(2+)</name>
        <dbReference type="ChEBI" id="CHEBI:29108"/>
        <label>2</label>
        <note>structural</note>
    </ligand>
</feature>
<feature type="binding site" evidence="1">
    <location>
        <position position="45"/>
    </location>
    <ligand>
        <name>Ca(2+)</name>
        <dbReference type="ChEBI" id="CHEBI:29108"/>
        <label>2</label>
        <note>structural</note>
    </ligand>
</feature>
<feature type="binding site" evidence="1">
    <location>
        <position position="47"/>
    </location>
    <ligand>
        <name>Ca(2+)</name>
        <dbReference type="ChEBI" id="CHEBI:29108"/>
        <label>2</label>
        <note>structural</note>
    </ligand>
</feature>
<feature type="binding site" evidence="1">
    <location>
        <position position="79"/>
    </location>
    <ligand>
        <name>Ca(2+)</name>
        <dbReference type="ChEBI" id="CHEBI:29108"/>
        <label>1</label>
        <note>structural</note>
    </ligand>
</feature>
<feature type="binding site" evidence="1">
    <location>
        <position position="80"/>
    </location>
    <ligand>
        <name>Ca(2+)</name>
        <dbReference type="ChEBI" id="CHEBI:29108"/>
        <label>1</label>
        <note>structural</note>
    </ligand>
</feature>
<feature type="binding site" evidence="2 4">
    <location>
        <position position="368"/>
    </location>
    <ligand>
        <name>Fe cation</name>
        <dbReference type="ChEBI" id="CHEBI:24875"/>
        <note>catalytic</note>
    </ligand>
</feature>
<feature type="binding site" evidence="2 4">
    <location>
        <position position="373"/>
    </location>
    <ligand>
        <name>Fe cation</name>
        <dbReference type="ChEBI" id="CHEBI:24875"/>
        <note>catalytic</note>
    </ligand>
</feature>
<feature type="binding site" evidence="2 4">
    <location>
        <position position="551"/>
    </location>
    <ligand>
        <name>Fe cation</name>
        <dbReference type="ChEBI" id="CHEBI:24875"/>
        <note>catalytic</note>
    </ligand>
</feature>
<feature type="binding site" evidence="2 4">
    <location>
        <position position="555"/>
    </location>
    <ligand>
        <name>Fe cation</name>
        <dbReference type="ChEBI" id="CHEBI:24875"/>
        <note>catalytic</note>
    </ligand>
</feature>
<feature type="binding site" evidence="2 4">
    <location>
        <position position="674"/>
    </location>
    <ligand>
        <name>Fe cation</name>
        <dbReference type="ChEBI" id="CHEBI:24875"/>
        <note>catalytic</note>
    </ligand>
</feature>
<feature type="site" description="Essential for stabilizing binding to COTL1" evidence="1">
    <location>
        <position position="103"/>
    </location>
</feature>
<feature type="modified residue" description="Phosphoserine" evidence="2">
    <location>
        <position position="272"/>
    </location>
</feature>
<feature type="modified residue" description="Phosphoserine" evidence="2">
    <location>
        <position position="524"/>
    </location>
</feature>
<feature type="mutagenesis site" description="Increases formation of (8S)-hydroperoxyicosatetraenoic acid ((8S)-HPETE). Exhibits a (8S)-lipoxygenase activity; when associated with I-425. Exhibits a (15S)-lipoxygenase activity; when associated with I-425 and M-426. Loss of arachidonate (5S)-lipoxygenase activity; when associated with G-411; I-425 and M-426. Forms 11(R)-hydroperoxyicosatetraenoic acid (11(R)-HPETE) as the major arachidonic acid oxygenation product; when associated with G-411; I-425 and M-426. Does not oxygenate arachidonic acid into 5-HETE; when associated with I-425 and M-426. Catalyzes oxygenation of arachidonic acid into a major product (15S)-HETE followed by 12-HETE and 8-HETE;when associated with I-425 and M-426. Catalyzes oxygenation of linoleic acid, gamma-linolenic acid, arachidonic acid, eicosapentaenoic acid and docosahexaenoic acid; when associated with I-425 and M-426. Catalyzes oxygenation of anandamide to 15-OH-ANA. Knockin mice are viable, fertile, and develop normally; when associated with I-425 and M-426. Mice convert arachidonic to 15-HETE, 12-HETE, and 8-HETE; when associated with I-425 and M-426. Mice cannot synthesize pro-inflammatory leukotrienes but show significantly attenuated plasma levels of lipolytic endocannabinoids; when associated with I-425 and M-426. When aging, animals gain significantly more body weight probably due to higher levels of 13-HODE in the adipose tissue; when associated with I-425 and M-426." evidence="9 15">
    <original>F</original>
    <variation>W</variation>
    <location>
        <position position="360"/>
    </location>
</feature>
<feature type="mutagenesis site" description="Decreases (5S)-lipoxygenase activity. Forms 9-hydroperoxyicosatetraenoic acid (9-HPETE) as the major arachidonic acid oxygenation product. Loss of arachidonate (5S)-lipoxygenase activity; when associated with W-360; I-425 and M-426. Forms 11(R)-hydroperoxyicosatetraenoic acid (11(R)-HPETE) as the major arachidonic acid oxygenation product; when associated with W-360; I-425 and M-426." evidence="9">
    <original>A</original>
    <variation>G</variation>
    <location>
        <position position="411"/>
    </location>
</feature>
<feature type="mutagenesis site" description="Decreases arachidonate (5S)-lipoxygenase activity. Decreases arachidonate 5 lipoxygenase activity; when associated with A-604. Exhibits a (8S)-lipoxygenase activity; when associated with W-360. Exhibits a (15S)-lipoxygenase activity; when associated with W-360 and M-426. Loss of arachidonate (5S)-lipoxygenase activity; when associated with W-360; G-411 and M-426. Forms 11(R)-hydroperoxyicosatetraenoic acid (11(R)-HPETE) as the major arachidonic acid oxygenation product; when associated with W-360; G-411 and M-426. Does not oxygenate arachidonic acid into 5-HETE; when associated with I-425 and M-426. Catalyzes oxygenation of arachidonic acid into a major product (15S)-HETE followed by 12-HETE and 8-HETE; when associated with I-425 and M-426. Catalyzes oxygenation of linoleic acid, gamma-linolenic acid, arachidonic acid, eicosapentaenoic acid and docosahexaenoic acid; when associated with I-425 and M-426. Catalyzes oxygenation of anandamide to 15-OH-ANA. Knockin mice are viable, fertile, and develop normally; when associated with I-425 and M-426. Mice convert arachidonic to 15-HETE, 12-HETE, and 8-HETE; when associated with I-425 and M-426. Mice cannot synthesize pro-inflammatory leukotrienes but show significantly attenuated plasma levels of lipolytic endocannabinoids; when associated with I-425 and M-426. When aging, animals gain significantly more body weight probably due to higher levels of 13-HODE in the adipose tissue; when associated with I-425 and M-426." evidence="9 15">
    <original>A</original>
    <variation>I</variation>
    <location>
        <position position="425"/>
    </location>
</feature>
<feature type="mutagenesis site" description="Increases formation of (8S)-hydroperoxyicosatetraenoic acid ((8S)-HPETE) and (12S)-hydroperoxyicosatetraenoic acid ((12S)-HPETE). Exhibits a (15S)-lipoxygenase activity; when associated with W-360 and I-425. Loss of arachidonate (5S)-lipoxygenase activity; when associated with W-360; G-411 and I-425. Forms 11(R)-hydroperoxyicosatetraenoic acid (11(R)-HPETE) as the major arachidonic acid oxygenation product; when associated with W-360; G-411 and I-425." evidence="9 15">
    <original>N</original>
    <variation>M</variation>
    <location>
        <position position="426"/>
    </location>
</feature>
<feature type="mutagenesis site" description="Decreases arachidonate (5S)-lipoxygenase activity." evidence="9">
    <original>A</original>
    <variation>I</variation>
    <location>
        <position position="604"/>
    </location>
</feature>
<feature type="mutagenesis site" description="Loss of activity." evidence="16">
    <original>V</original>
    <variation>M</variation>
    <location>
        <position position="672"/>
    </location>
</feature>
<feature type="sequence conflict" description="In Ref. 1; AAC37673." evidence="20" ref="1">
    <original>I</original>
    <variation>M</variation>
    <location>
        <position position="466"/>
    </location>
</feature>
<feature type="sequence conflict" description="In Ref. 1; AAC37673." evidence="20" ref="1">
    <original>V</original>
    <variation>I</variation>
    <location>
        <position position="646"/>
    </location>
</feature>
<gene>
    <name evidence="22" type="primary">Alox5</name>
</gene>
<sequence>MPSYTVTVATGSQWFAGTDDYIYLSLIGSAGCSEKHLLDKAFYNDFERGAVDSYDVTVDEELGEIYLVKIEKRKYWLHDDWYLKYITLKTPHGDYIEFPCYRWITGEGEIVLRDGRAKLARDDQIHILKQHRRKELEARQKQYRWMEWNPGFPLSIDAKCHKDLPRDIQFDSEKGVDFVLNYSKAMENLFINRFMHMFQSSWHDFADFEKIFVKISNTISERVKNHWQEDLMFGYQFLNGCNPVLIKRCTALPPKLPVTTEMVECSLERQLSLEQEVQEGNIFIVDYELLDGIDANKTDPCTHQFLAAPICLLYKNLANKIVPIAIQLNQTPGESNPIFLPTDSKYDWLLAKIWVRSSDFHVHQTITHLLRTHLVSEVFGIAMYRQLPAVHPLFKLLVAHVRFTIAINTKAREQLICEYGLFDKANATGGGGHVQMVQRAVQDLTYSSLCFPEAIKARGMDSTEDIPFYFYRDDGLLVWEAIQSFTMEVVSIYYENDQVVEEDQELQDFVKDVYVYGMRGKKASGFPKSIKSREKLSEYLTVVIFTASAQHAAVNFGQYDWCSWIPNAPPTMRAPPPTAKGVVTIEQIVDTLPDRGRSCWHLGAVWALSQFQENELFLGMYPEEHFIEKPVKEAMIRFRKNLEAIVSVIAERNKNKKLPYYYLSPDRIPNSVAI</sequence>
<comment type="function">
    <text evidence="2 5 6 7 8 9 10 11 12 13 14 15 16 17 18">Catalyzes the oxygenation of arachidonate to 5-hydroperoxyeicosatetraenoate (5-HPETE) followed by the dehydration to 5,6- epoxyeicosatetraenoate (Leukotriene A4/LTA4), the first two steps in the biosynthesis of leukotrienes, which are potent mediators of inflammation (PubMed:23246375, PubMed:31642348, PubMed:7629107, PubMed:7809134, PubMed:7969451). Also catalyzes the oxygenation of arachidonic acid into 8-hydroperoxyicosatetraenoic acid (8-HPETE) and 12-hydroperoxyicosatetraenoic acid (12-HPETE) (PubMed:23246375). Displays lipoxin synthase activity being able to convert (15S)-HETE into a conjugate tetraene (By similarity). Although arachidonate is the preferred substrate, this enzyme can also metabolize oxidized fatty acids derived from arachidonate such as (15S)-HETE, eicosapentaenoate (EPA) such as (18R)- and (18S)-HEPE or docosahexaenoate (DHA) which lead to the formation of specialized pro-resolving mediators (SPM) lipoxin and resolvins E and D respectively, therefore it participates in anti-inflammatory responses (PubMed:31642348). Oxidation of DHA directly inhibits endothelial cell proliferation and sprouting angiogenesis via peroxisome proliferator-activated receptor gamma (PPARgamma) (PubMed:21307302). It does not catalyze the oxygenation of linoleic acid and does not convert (5S)-HETE to lipoxin isomers (PubMed:31642348). In addition to inflammatory processes, participates in dendritic cell migration, wound healing through an antioxidant mechanism based on heme oxygenase-1 (HO-1) regulation expression, monocyte adhesion to the endothelium via ITGAM expression on monocytes (PubMed:17392829, PubMed:23720274, PubMed:24226420, PubMed:28965882). Moreover, it helps establish an adaptive humoral immunity by regulating primary resting B cells and follicular helper T cells and participates in the CD40-induced production of reactive oxygen species (ROS) after CD40 ligation in B cells through interaction with PIK3R1 that bridges ALOX5 with CD40 (PubMed:21224059). May also play a role in glucose homeostasis, regulation of insulin secretion and palmitic acid-induced insulin resistance via AMPK (PubMed:18421434, PubMed:28694473). Can regulate bone mineralization and fat cell differentiation increases in induced pluripotent stem cells (PubMed:24906289).</text>
</comment>
<comment type="catalytic activity">
    <reaction evidence="9 15">
        <text>(5Z,8Z,11Z,14Z)-eicosatetraenoate + O2 = (5S)-hydroperoxy-(6E,8Z,11Z,14Z)-eicosatetraenoate</text>
        <dbReference type="Rhea" id="RHEA:17485"/>
        <dbReference type="ChEBI" id="CHEBI:15379"/>
        <dbReference type="ChEBI" id="CHEBI:32395"/>
        <dbReference type="ChEBI" id="CHEBI:57450"/>
    </reaction>
    <physiologicalReaction direction="left-to-right" evidence="15">
        <dbReference type="Rhea" id="RHEA:17486"/>
    </physiologicalReaction>
</comment>
<comment type="catalytic activity">
    <reaction evidence="15">
        <text>(5Z,8Z,11Z,14Z)-eicosatetraenoate + O2 = leukotriene A4 + H2O</text>
        <dbReference type="Rhea" id="RHEA:32307"/>
        <dbReference type="ChEBI" id="CHEBI:15377"/>
        <dbReference type="ChEBI" id="CHEBI:15379"/>
        <dbReference type="ChEBI" id="CHEBI:32395"/>
        <dbReference type="ChEBI" id="CHEBI:57463"/>
        <dbReference type="EC" id="1.13.11.34"/>
    </reaction>
    <physiologicalReaction direction="left-to-right" evidence="15">
        <dbReference type="Rhea" id="RHEA:32308"/>
    </physiologicalReaction>
</comment>
<comment type="catalytic activity">
    <reaction evidence="9">
        <text>(5Z,8Z,11Z,14Z)-eicosatetraenoate + O2 = (8S)-hydroperoxy-(5Z,9E,11Z,14Z)-eicosatetraenoate</text>
        <dbReference type="Rhea" id="RHEA:38675"/>
        <dbReference type="ChEBI" id="CHEBI:15379"/>
        <dbReference type="ChEBI" id="CHEBI:32395"/>
        <dbReference type="ChEBI" id="CHEBI:75322"/>
    </reaction>
    <physiologicalReaction direction="left-to-right" evidence="21">
        <dbReference type="Rhea" id="RHEA:38676"/>
    </physiologicalReaction>
</comment>
<comment type="catalytic activity">
    <reaction evidence="9">
        <text>(5Z,8Z,11Z,14Z)-eicosatetraenoate + O2 = (12S)-hydroperoxy-(5Z,8Z,10E,14Z)-eicosatetraenoate</text>
        <dbReference type="Rhea" id="RHEA:10428"/>
        <dbReference type="ChEBI" id="CHEBI:15379"/>
        <dbReference type="ChEBI" id="CHEBI:32395"/>
        <dbReference type="ChEBI" id="CHEBI:57444"/>
    </reaction>
    <physiologicalReaction direction="left-to-right" evidence="21">
        <dbReference type="Rhea" id="RHEA:10429"/>
    </physiologicalReaction>
</comment>
<comment type="catalytic activity">
    <reaction evidence="2">
        <text>18-HEPE + O2 = (5S)-hydroperoxy-18-hydroxy-(7E,9E,11Z,14Z,16E)-eicosapentaenoate</text>
        <dbReference type="Rhea" id="RHEA:48860"/>
        <dbReference type="ChEBI" id="CHEBI:15379"/>
        <dbReference type="ChEBI" id="CHEBI:90825"/>
        <dbReference type="ChEBI" id="CHEBI:90826"/>
    </reaction>
    <physiologicalReaction direction="left-to-right" evidence="2">
        <dbReference type="Rhea" id="RHEA:48861"/>
    </physiologicalReaction>
</comment>
<comment type="catalytic activity">
    <reaction evidence="2">
        <text>(18R)-hydroxy-(5Z,8Z,11Z,14Z,16E)-eicosapentaenoate + O2 = (5S)-hydroperoxy-(18R)-hydroxy-(6E,8Z,11Z,14Z,16E)-eicosapentaenoate</text>
        <dbReference type="Rhea" id="RHEA:51968"/>
        <dbReference type="ChEBI" id="CHEBI:15379"/>
        <dbReference type="ChEBI" id="CHEBI:90818"/>
        <dbReference type="ChEBI" id="CHEBI:132218"/>
    </reaction>
    <physiologicalReaction direction="left-to-right" evidence="2">
        <dbReference type="Rhea" id="RHEA:51969"/>
    </physiologicalReaction>
</comment>
<comment type="catalytic activity">
    <reaction evidence="2">
        <text>(18S)-hydroxy-(5Z,8Z,11Z,14Z,16E)-eicosapentaenoate + O2 = (5S)-hydroperoxy-(18S)-hydroxy-(6E,8Z,11Z,14Z,16E)-eicosapentaenoate</text>
        <dbReference type="Rhea" id="RHEA:50204"/>
        <dbReference type="ChEBI" id="CHEBI:15379"/>
        <dbReference type="ChEBI" id="CHEBI:132083"/>
        <dbReference type="ChEBI" id="CHEBI:132091"/>
    </reaction>
    <physiologicalReaction direction="left-to-right" evidence="2">
        <dbReference type="Rhea" id="RHEA:50205"/>
    </physiologicalReaction>
</comment>
<comment type="catalytic activity">
    <reaction evidence="2">
        <text>(5S)-hydroperoxy-(18S)-hydroxy-(6E,8Z,11Z,14Z,16E)-eicosapentaenoate = (5S,6S)-epoxy-(18S)-hydroxy-(7E,9E,11Z,14Z,16E)-eicosapentaenoate + H2O</text>
        <dbReference type="Rhea" id="RHEA:39107"/>
        <dbReference type="ChEBI" id="CHEBI:15377"/>
        <dbReference type="ChEBI" id="CHEBI:132091"/>
        <dbReference type="ChEBI" id="CHEBI:134661"/>
    </reaction>
    <physiologicalReaction direction="left-to-right" evidence="2">
        <dbReference type="Rhea" id="RHEA:39108"/>
    </physiologicalReaction>
</comment>
<comment type="catalytic activity">
    <reaction evidence="2">
        <text>(5S)-hydroperoxy-(18R)-hydroxy-(6E,8Z,11Z,14Z,16E)-eicosapentaenoate = (5S,6S)-epoxy-(18R)-hydroxy-(7E,9E,11Z,14Z,16E)-eicosapentaenoate + H2O</text>
        <dbReference type="Rhea" id="RHEA:50268"/>
        <dbReference type="ChEBI" id="CHEBI:15377"/>
        <dbReference type="ChEBI" id="CHEBI:132218"/>
        <dbReference type="ChEBI" id="CHEBI:132219"/>
    </reaction>
    <physiologicalReaction direction="left-to-right" evidence="2">
        <dbReference type="Rhea" id="RHEA:50269"/>
    </physiologicalReaction>
</comment>
<comment type="catalytic activity">
    <reaction evidence="2">
        <text>(5S)-hydroperoxy-18-hydroxy-(7E,9E,11Z,14Z,16E)-eicosapentaenoate = (5S,6S)-epoxy-18-hydroxy-(7E,9E,11Z,14Z,16E)-eicosapentaenoate + H2O</text>
        <dbReference type="Rhea" id="RHEA:50844"/>
        <dbReference type="ChEBI" id="CHEBI:15377"/>
        <dbReference type="ChEBI" id="CHEBI:90826"/>
        <dbReference type="ChEBI" id="CHEBI:133812"/>
    </reaction>
    <physiologicalReaction direction="left-to-right" evidence="2">
        <dbReference type="Rhea" id="RHEA:50845"/>
    </physiologicalReaction>
</comment>
<comment type="catalytic activity">
    <reaction evidence="2">
        <text>(15S)-hydroxy-(5Z,8Z,11Z,13E)-eicosatetraenoate + O2 = (5S)-hydroperoxy-(15S)-hydroxy-(6E,8Z,11Z,13E)-eicosatetraenoate</text>
        <dbReference type="Rhea" id="RHEA:48624"/>
        <dbReference type="ChEBI" id="CHEBI:15379"/>
        <dbReference type="ChEBI" id="CHEBI:57409"/>
        <dbReference type="ChEBI" id="CHEBI:131564"/>
    </reaction>
    <physiologicalReaction direction="left-to-right" evidence="2">
        <dbReference type="Rhea" id="RHEA:48625"/>
    </physiologicalReaction>
</comment>
<comment type="catalytic activity">
    <reaction evidence="2">
        <text>(5S)-hydroperoxy-(6E,8Z,11Z,14Z)-eicosatetraenoate = leukotriene A4 + H2O</text>
        <dbReference type="Rhea" id="RHEA:17961"/>
        <dbReference type="ChEBI" id="CHEBI:15377"/>
        <dbReference type="ChEBI" id="CHEBI:57450"/>
        <dbReference type="ChEBI" id="CHEBI:57463"/>
    </reaction>
    <physiologicalReaction direction="left-to-right" evidence="2">
        <dbReference type="Rhea" id="RHEA:17962"/>
    </physiologicalReaction>
</comment>
<comment type="catalytic activity">
    <reaction evidence="2">
        <text>(5Z,8Z)-eicosadienoate + O2 = (5S)-hydroperoxy-(6E,8Z)-eicosadienoate</text>
        <dbReference type="Rhea" id="RHEA:62644"/>
        <dbReference type="ChEBI" id="CHEBI:15379"/>
        <dbReference type="ChEBI" id="CHEBI:145835"/>
        <dbReference type="ChEBI" id="CHEBI:145836"/>
    </reaction>
</comment>
<comment type="catalytic activity">
    <reaction evidence="2">
        <text>(12S)-hydroxy-(5Z,8Z,10E,14Z)-eicosatetraenoate + O2 = (5S)-hydroperoxy-(12S)-hydroxy-(6E,8Z,10E,14Z)-eicosatetraenoate</text>
        <dbReference type="Rhea" id="RHEA:62648"/>
        <dbReference type="ChEBI" id="CHEBI:15379"/>
        <dbReference type="ChEBI" id="CHEBI:90680"/>
        <dbReference type="ChEBI" id="CHEBI:145837"/>
    </reaction>
</comment>
<comment type="catalytic activity">
    <reaction evidence="2">
        <text>(5Z,8Z,11Z,14Z,17Z)-eicosapentaenoate + O2 = 5-hydroperoxy-(6E,8Z,11Z,14Z,17Z)-eicosapentaenoate</text>
        <dbReference type="Rhea" id="RHEA:62600"/>
        <dbReference type="ChEBI" id="CHEBI:15379"/>
        <dbReference type="ChEBI" id="CHEBI:58562"/>
        <dbReference type="ChEBI" id="CHEBI:145815"/>
    </reaction>
    <physiologicalReaction direction="left-to-right" evidence="2">
        <dbReference type="Rhea" id="RHEA:62601"/>
    </physiologicalReaction>
</comment>
<comment type="catalytic activity">
    <reaction evidence="2">
        <text>(4Z,7Z,10Z,13Z,16Z,19Z)-docosahexaenoate + O2 = (14S)-hydroperoxy-(4Z,7Z,10Z,12E,16Z,19Z)-docosahexaenoate</text>
        <dbReference type="Rhea" id="RHEA:41332"/>
        <dbReference type="ChEBI" id="CHEBI:15379"/>
        <dbReference type="ChEBI" id="CHEBI:77016"/>
        <dbReference type="ChEBI" id="CHEBI:78048"/>
    </reaction>
    <physiologicalReaction direction="left-to-right" evidence="2">
        <dbReference type="Rhea" id="RHEA:41333"/>
    </physiologicalReaction>
</comment>
<comment type="catalytic activity">
    <reaction evidence="2">
        <text>(4Z,7Z,10Z,13Z,16Z,19Z)-docosahexaenoate + O2 = (7S)-hydroperoxy-(4Z,8E,10Z,13Z,16Z,19Z)-docosahexaenoate</text>
        <dbReference type="Rhea" id="RHEA:64668"/>
        <dbReference type="ChEBI" id="CHEBI:15379"/>
        <dbReference type="ChEBI" id="CHEBI:77016"/>
        <dbReference type="ChEBI" id="CHEBI:156049"/>
    </reaction>
    <physiologicalReaction direction="left-to-right" evidence="2">
        <dbReference type="Rhea" id="RHEA:64669"/>
    </physiologicalReaction>
</comment>
<comment type="catalytic activity">
    <reaction evidence="2">
        <text>(4Z,7Z,10Z,13Z,16Z,19Z)-docosahexaenoate + O2 = (17S)-hydroperoxy-(4Z,7Z,10Z,13Z,15E,19Z)-docosahexaenoate</text>
        <dbReference type="Rhea" id="RHEA:50840"/>
        <dbReference type="ChEBI" id="CHEBI:15379"/>
        <dbReference type="ChEBI" id="CHEBI:77016"/>
        <dbReference type="ChEBI" id="CHEBI:133795"/>
    </reaction>
    <physiologicalReaction direction="left-to-right" evidence="2">
        <dbReference type="Rhea" id="RHEA:50841"/>
    </physiologicalReaction>
</comment>
<comment type="cofactor">
    <cofactor evidence="2 4">
        <name>Fe cation</name>
        <dbReference type="ChEBI" id="CHEBI:24875"/>
    </cofactor>
    <text evidence="2 4">Binds 1 Fe cation per subunit.</text>
</comment>
<comment type="biophysicochemical properties">
    <kinetics>
        <KM evidence="9">44.7 uM for arachidonic acid</KM>
    </kinetics>
</comment>
<comment type="pathway">
    <text evidence="15">Lipid metabolism; leukotriene A4 biosynthesis.</text>
</comment>
<comment type="subunit">
    <text evidence="2">Homodimer. Interacts with ALOX5AP and LTC4S. Interacts with COTL1, the interaction is required for stability and efficient catalytic activity. Interacts with PIK3R1; this interaction bridges ALOX5 with CD40 after CD40 ligation in B cells and leads to the production of reactive oxygen species (ROS). Interacts (via PLAT domain) with DICER1 (via Dicer dsRNA-binding fold domain); this interaction enhances arachidonate 5-lipoxygenase activity and modifies the miRNA precursor processing activity of DICER1.</text>
</comment>
<comment type="subcellular location">
    <subcellularLocation>
        <location evidence="2 4 16">Cytoplasm</location>
    </subcellularLocation>
    <subcellularLocation>
        <location evidence="16">Nucleus matrix</location>
    </subcellularLocation>
    <subcellularLocation>
        <location evidence="2">Nucleus membrane</location>
        <topology evidence="2">Peripheral membrane protein</topology>
    </subcellularLocation>
    <subcellularLocation>
        <location evidence="2">Cytoplasm</location>
        <location evidence="2">Perinuclear region</location>
    </subcellularLocation>
    <subcellularLocation>
        <location evidence="2">Cytoplasm</location>
        <location evidence="2">Cytosol</location>
    </subcellularLocation>
    <subcellularLocation>
        <location evidence="2">Nucleus envelope</location>
    </subcellularLocation>
    <subcellularLocation>
        <location evidence="2">Nucleus intermembrane space</location>
    </subcellularLocation>
    <text evidence="2">Shuttles between cytoplasm and nucleus. Found exclusively in the nucleus, when phosphorylated on Ser-272. Calcium binding promotes translocation from the cytosol and the nuclear matrix to the nuclear envelope and membrane association.</text>
</comment>
<comment type="tissue specificity">
    <text evidence="5 8">Expressed in skin Langerhans cells and their emigrated counterparts in draining lymph nodes (PubMed:17392829). Highly expressed in circulating leukocytes (PubMed:21307302).</text>
</comment>
<comment type="induction">
    <text evidence="10">IncreaseD by both NF-kappa-B and SP1 in LPS-treated monocytes.</text>
</comment>
<comment type="PTM">
    <text evidence="2">Serine phosphorylation by MAPKAPK2 is stimulated by arachidonic acid. Phosphorylation on Ser-524 by PKA has an inhibitory effect. Phosphorylation on Ser-272 prevents export from the nucleus. Phosphorylation at Ser-524 is stimulated by 8-bromo-3',5'-cyclic AMP or prostaglandin E2.</text>
</comment>
<comment type="disruption phenotype">
    <text evidence="17 18">Homozygous mice for ALOX5 are also present in the expected ratios. Mice are indistinguishable in growth and size from wild type littermates (PubMed:7809134). Homozygous mice for ALOX5 show no apparent abnormalities up to ten months of age under normal physiological conditions, except that the spleen is usually smaller for 8-week-old mice (PubMed:7969451).</text>
</comment>
<comment type="miscellaneous">
    <text evidence="9">Can be converted from pro-inflammatory 5-lipoxygenase to anti-inflammatory 15-lipoxygenase by reducing the volume of the substrate-binding pocket.</text>
</comment>
<comment type="similarity">
    <text evidence="20">Belongs to the lipoxygenase family.</text>
</comment>
<proteinExistence type="evidence at protein level"/>
<reference key="1">
    <citation type="journal article" date="1995" name="J. Biol. Chem.">
        <title>cDNA cloning, expression, mutagenesis, intracellular localization, and gene chromosomal assignment of mouse 5-lipoxygenase.</title>
        <authorList>
            <person name="Chen X.-S."/>
            <person name="Naumann T.A."/>
            <person name="Kurre U."/>
            <person name="Jenkins N.A."/>
            <person name="Copeland N.G."/>
            <person name="Funk C.D."/>
        </authorList>
    </citation>
    <scope>NUCLEOTIDE SEQUENCE [MRNA]</scope>
    <scope>FUNCTION</scope>
    <scope>SUBCELLULAR LOCATION</scope>
    <scope>MUTAGENESIS OF VAL-672</scope>
    <source>
        <strain>C57BL/6 X 129/Sv</strain>
        <tissue>Peritoneal cavity</tissue>
    </source>
</reference>
<reference key="2">
    <citation type="journal article" date="2005" name="Science">
        <title>The transcriptional landscape of the mammalian genome.</title>
        <authorList>
            <person name="Carninci P."/>
            <person name="Kasukawa T."/>
            <person name="Katayama S."/>
            <person name="Gough J."/>
            <person name="Frith M.C."/>
            <person name="Maeda N."/>
            <person name="Oyama R."/>
            <person name="Ravasi T."/>
            <person name="Lenhard B."/>
            <person name="Wells C."/>
            <person name="Kodzius R."/>
            <person name="Shimokawa K."/>
            <person name="Bajic V.B."/>
            <person name="Brenner S.E."/>
            <person name="Batalov S."/>
            <person name="Forrest A.R."/>
            <person name="Zavolan M."/>
            <person name="Davis M.J."/>
            <person name="Wilming L.G."/>
            <person name="Aidinis V."/>
            <person name="Allen J.E."/>
            <person name="Ambesi-Impiombato A."/>
            <person name="Apweiler R."/>
            <person name="Aturaliya R.N."/>
            <person name="Bailey T.L."/>
            <person name="Bansal M."/>
            <person name="Baxter L."/>
            <person name="Beisel K.W."/>
            <person name="Bersano T."/>
            <person name="Bono H."/>
            <person name="Chalk A.M."/>
            <person name="Chiu K.P."/>
            <person name="Choudhary V."/>
            <person name="Christoffels A."/>
            <person name="Clutterbuck D.R."/>
            <person name="Crowe M.L."/>
            <person name="Dalla E."/>
            <person name="Dalrymple B.P."/>
            <person name="de Bono B."/>
            <person name="Della Gatta G."/>
            <person name="di Bernardo D."/>
            <person name="Down T."/>
            <person name="Engstrom P."/>
            <person name="Fagiolini M."/>
            <person name="Faulkner G."/>
            <person name="Fletcher C.F."/>
            <person name="Fukushima T."/>
            <person name="Furuno M."/>
            <person name="Futaki S."/>
            <person name="Gariboldi M."/>
            <person name="Georgii-Hemming P."/>
            <person name="Gingeras T.R."/>
            <person name="Gojobori T."/>
            <person name="Green R.E."/>
            <person name="Gustincich S."/>
            <person name="Harbers M."/>
            <person name="Hayashi Y."/>
            <person name="Hensch T.K."/>
            <person name="Hirokawa N."/>
            <person name="Hill D."/>
            <person name="Huminiecki L."/>
            <person name="Iacono M."/>
            <person name="Ikeo K."/>
            <person name="Iwama A."/>
            <person name="Ishikawa T."/>
            <person name="Jakt M."/>
            <person name="Kanapin A."/>
            <person name="Katoh M."/>
            <person name="Kawasawa Y."/>
            <person name="Kelso J."/>
            <person name="Kitamura H."/>
            <person name="Kitano H."/>
            <person name="Kollias G."/>
            <person name="Krishnan S.P."/>
            <person name="Kruger A."/>
            <person name="Kummerfeld S.K."/>
            <person name="Kurochkin I.V."/>
            <person name="Lareau L.F."/>
            <person name="Lazarevic D."/>
            <person name="Lipovich L."/>
            <person name="Liu J."/>
            <person name="Liuni S."/>
            <person name="McWilliam S."/>
            <person name="Madan Babu M."/>
            <person name="Madera M."/>
            <person name="Marchionni L."/>
            <person name="Matsuda H."/>
            <person name="Matsuzawa S."/>
            <person name="Miki H."/>
            <person name="Mignone F."/>
            <person name="Miyake S."/>
            <person name="Morris K."/>
            <person name="Mottagui-Tabar S."/>
            <person name="Mulder N."/>
            <person name="Nakano N."/>
            <person name="Nakauchi H."/>
            <person name="Ng P."/>
            <person name="Nilsson R."/>
            <person name="Nishiguchi S."/>
            <person name="Nishikawa S."/>
            <person name="Nori F."/>
            <person name="Ohara O."/>
            <person name="Okazaki Y."/>
            <person name="Orlando V."/>
            <person name="Pang K.C."/>
            <person name="Pavan W.J."/>
            <person name="Pavesi G."/>
            <person name="Pesole G."/>
            <person name="Petrovsky N."/>
            <person name="Piazza S."/>
            <person name="Reed J."/>
            <person name="Reid J.F."/>
            <person name="Ring B.Z."/>
            <person name="Ringwald M."/>
            <person name="Rost B."/>
            <person name="Ruan Y."/>
            <person name="Salzberg S.L."/>
            <person name="Sandelin A."/>
            <person name="Schneider C."/>
            <person name="Schoenbach C."/>
            <person name="Sekiguchi K."/>
            <person name="Semple C.A."/>
            <person name="Seno S."/>
            <person name="Sessa L."/>
            <person name="Sheng Y."/>
            <person name="Shibata Y."/>
            <person name="Shimada H."/>
            <person name="Shimada K."/>
            <person name="Silva D."/>
            <person name="Sinclair B."/>
            <person name="Sperling S."/>
            <person name="Stupka E."/>
            <person name="Sugiura K."/>
            <person name="Sultana R."/>
            <person name="Takenaka Y."/>
            <person name="Taki K."/>
            <person name="Tammoja K."/>
            <person name="Tan S.L."/>
            <person name="Tang S."/>
            <person name="Taylor M.S."/>
            <person name="Tegner J."/>
            <person name="Teichmann S.A."/>
            <person name="Ueda H.R."/>
            <person name="van Nimwegen E."/>
            <person name="Verardo R."/>
            <person name="Wei C.L."/>
            <person name="Yagi K."/>
            <person name="Yamanishi H."/>
            <person name="Zabarovsky E."/>
            <person name="Zhu S."/>
            <person name="Zimmer A."/>
            <person name="Hide W."/>
            <person name="Bult C."/>
            <person name="Grimmond S.M."/>
            <person name="Teasdale R.D."/>
            <person name="Liu E.T."/>
            <person name="Brusic V."/>
            <person name="Quackenbush J."/>
            <person name="Wahlestedt C."/>
            <person name="Mattick J.S."/>
            <person name="Hume D.A."/>
            <person name="Kai C."/>
            <person name="Sasaki D."/>
            <person name="Tomaru Y."/>
            <person name="Fukuda S."/>
            <person name="Kanamori-Katayama M."/>
            <person name="Suzuki M."/>
            <person name="Aoki J."/>
            <person name="Arakawa T."/>
            <person name="Iida J."/>
            <person name="Imamura K."/>
            <person name="Itoh M."/>
            <person name="Kato T."/>
            <person name="Kawaji H."/>
            <person name="Kawagashira N."/>
            <person name="Kawashima T."/>
            <person name="Kojima M."/>
            <person name="Kondo S."/>
            <person name="Konno H."/>
            <person name="Nakano K."/>
            <person name="Ninomiya N."/>
            <person name="Nishio T."/>
            <person name="Okada M."/>
            <person name="Plessy C."/>
            <person name="Shibata K."/>
            <person name="Shiraki T."/>
            <person name="Suzuki S."/>
            <person name="Tagami M."/>
            <person name="Waki K."/>
            <person name="Watahiki A."/>
            <person name="Okamura-Oho Y."/>
            <person name="Suzuki H."/>
            <person name="Kawai J."/>
            <person name="Hayashizaki Y."/>
        </authorList>
    </citation>
    <scope>NUCLEOTIDE SEQUENCE [LARGE SCALE MRNA]</scope>
    <source>
        <strain>C57BL/6J</strain>
        <tissue>Bone</tissue>
    </source>
</reference>
<reference key="3">
    <citation type="journal article" date="2004" name="Genome Res.">
        <title>The status, quality, and expansion of the NIH full-length cDNA project: the Mammalian Gene Collection (MGC).</title>
        <authorList>
            <consortium name="The MGC Project Team"/>
        </authorList>
    </citation>
    <scope>NUCLEOTIDE SEQUENCE [LARGE SCALE MRNA]</scope>
    <source>
        <tissue>Testis</tissue>
    </source>
</reference>
<reference key="4">
    <citation type="journal article" date="1994" name="Proc. Natl. Acad. Sci. U.S.A.">
        <title>Altered inflammatory responses in leukotriene-deficient mice.</title>
        <authorList>
            <person name="Goulet J.L."/>
            <person name="Snouwaert J.N."/>
            <person name="Latour A.M."/>
            <person name="Coffman T.M."/>
            <person name="Koller B.H."/>
        </authorList>
    </citation>
    <scope>DISRUPTION PHENOTYPE</scope>
    <scope>FUNCTION</scope>
</reference>
<reference key="5">
    <citation type="journal article" date="1994" name="Nature">
        <title>Role of leukotrienes revealed by targeted disruption of the 5-lipoxygenase gene.</title>
        <authorList>
            <person name="Chen X.S."/>
            <person name="Sheller J.R."/>
            <person name="Johnson E.N."/>
            <person name="Funk C.D."/>
        </authorList>
    </citation>
    <scope>DISRUPTION PHENOTYPE</scope>
    <scope>FUNCTION</scope>
</reference>
<reference key="6">
    <citation type="journal article" date="2007" name="J. Invest. Dermatol.">
        <title>Selective 5-lipoxygenase expression in Langerhans cells and impaired dendritic cell migration in 5-LO-deficient mice reveal leukotriene action in skin.</title>
        <authorList>
            <person name="Doepping S."/>
            <person name="Funk C.D."/>
            <person name="Habenicht A.J."/>
            <person name="Spanbroek R."/>
        </authorList>
    </citation>
    <scope>TISSUE SPECIFICITY</scope>
    <scope>FUNCTION</scope>
</reference>
<reference key="7">
    <citation type="journal article" date="2008" name="Diabetologia">
        <title>Identification of ALOX5 as a gene regulating adiposity and pancreatic function.</title>
        <authorList>
            <person name="Mehrabian M."/>
            <person name="Schulthess F.T."/>
            <person name="Nebohacova M."/>
            <person name="Castellani L.W."/>
            <person name="Zhou Z."/>
            <person name="Hartiala J."/>
            <person name="Oberholzer J."/>
            <person name="Lusis A.J."/>
            <person name="Maedler K."/>
            <person name="Allayee H."/>
        </authorList>
    </citation>
    <scope>FUNCTION</scope>
</reference>
<reference key="8">
    <citation type="journal article" date="2010" name="Cell">
        <title>A tissue-specific atlas of mouse protein phosphorylation and expression.</title>
        <authorList>
            <person name="Huttlin E.L."/>
            <person name="Jedrychowski M.P."/>
            <person name="Elias J.E."/>
            <person name="Goswami T."/>
            <person name="Rad R."/>
            <person name="Beausoleil S.A."/>
            <person name="Villen J."/>
            <person name="Haas W."/>
            <person name="Sowa M.E."/>
            <person name="Gygi S.P."/>
        </authorList>
    </citation>
    <scope>IDENTIFICATION BY MASS SPECTROMETRY [LARGE SCALE ANALYSIS]</scope>
    <source>
        <tissue>Lung</tissue>
    </source>
</reference>
<reference key="9">
    <citation type="journal article" date="2011" name="Am. J. Pathol.">
        <title>Arachidonate 5-lipoxygenase establishes adaptive humoral immunity by controlling primary B cells and their cognate T-cell help.</title>
        <authorList>
            <person name="Nagashima T."/>
            <person name="Ichimiya S."/>
            <person name="Kikuchi T."/>
            <person name="Saito Y."/>
            <person name="Matsumiya H."/>
            <person name="Ara S."/>
            <person name="Koshiba S."/>
            <person name="Zhang J."/>
            <person name="Hatate C."/>
            <person name="Tonooka A."/>
            <person name="Kubo T."/>
            <person name="Ye R.C."/>
            <person name="Hirose B."/>
            <person name="Shirasaki H."/>
            <person name="Izumi T."/>
            <person name="Takami T."/>
            <person name="Himi T."/>
            <person name="Sato N."/>
        </authorList>
    </citation>
    <scope>FUNCTION</scope>
</reference>
<reference key="10">
    <citation type="journal article" date="2011" name="Sci. Transl. Med.">
        <title>5-Lipoxygenase metabolite 4-HDHA is a mediator of the antiangiogenic effect of omega-3 polyunsaturated fatty acids.</title>
        <authorList>
            <person name="Sapieha P."/>
            <person name="Stahl A."/>
            <person name="Chen J."/>
            <person name="Seaward M.R."/>
            <person name="Willett K.L."/>
            <person name="Krah N.M."/>
            <person name="Dennison R.J."/>
            <person name="Connor K.M."/>
            <person name="Aderman C.M."/>
            <person name="Liclican E."/>
            <person name="Carughi A."/>
            <person name="Perelman D."/>
            <person name="Kanaoka Y."/>
            <person name="Sangiovanni J.P."/>
            <person name="Gronert K."/>
            <person name="Smith L.E."/>
        </authorList>
    </citation>
    <scope>TISSUE SPECIFICITY</scope>
    <scope>FUNCTION</scope>
</reference>
<reference key="11">
    <citation type="journal article" date="2013" name="Arch. Biochem. Biophys.">
        <title>Conversion of pro-inflammatory murine Alox5 into an anti-inflammatory 15S-lipoxygenating enzyme by multiple mutations of sequence determinants.</title>
        <authorList>
            <person name="Hofheinz K."/>
            <person name="Kakularam K.R."/>
            <person name="Adel S."/>
            <person name="Anton M."/>
            <person name="Polymarasetty A."/>
            <person name="Reddanna P."/>
            <person name="Kuhn H."/>
            <person name="Horn T."/>
        </authorList>
    </citation>
    <scope>CATALYTIC ACTIVITY</scope>
    <scope>FUNCTION</scope>
    <scope>BIOPHYSICOCHEMICAL PROPERTIES</scope>
    <scope>MUTAGENESIS OF PHE-360; ALA-411; ALA-425; ASN-426 AND ALA-604</scope>
</reference>
<reference key="12">
    <citation type="journal article" date="2013" name="Cardiovasc. Res.">
        <title>5-Lipoxygenase plays a pivotal role in endothelial adhesion of monocytes via an increased expression of Mac-1.</title>
        <authorList>
            <person name="Lee S.J."/>
            <person name="Choi E.K."/>
            <person name="Seo K.W."/>
            <person name="Bae J.U."/>
            <person name="Kim Y.H."/>
            <person name="Park S.Y."/>
            <person name="Oh S.O."/>
            <person name="Kim C.D."/>
        </authorList>
    </citation>
    <scope>FUNCTION</scope>
    <scope>INDUCTION</scope>
</reference>
<reference key="13">
    <citation type="journal article" date="2014" name="Cell Tissue Res.">
        <title>Deletion of Alox5 gene decreases osteogenic differentiation but increases adipogenic differentiation of mouse induced pluripotent stem cells.</title>
        <authorList>
            <person name="Wu Y."/>
            <person name="Sun H."/>
            <person name="Song F."/>
            <person name="Huang C."/>
            <person name="Wang J."/>
        </authorList>
    </citation>
    <scope>FUNCTION</scope>
</reference>
<reference key="14">
    <citation type="journal article" date="2014" name="J. Invest. Dermatol.">
        <title>Critical role of 5-lipoxygenase and heme oxygenase-1 in wound healing.</title>
        <authorList>
            <person name="Brogliato A.R."/>
            <person name="Moor A.N."/>
            <person name="Kesl S.L."/>
            <person name="Guilherme R.F."/>
            <person name="Georgii J.L."/>
            <person name="Peters-Golden M."/>
            <person name="Canetti C."/>
            <person name="Gould L.J."/>
            <person name="Benjamim C.F."/>
        </authorList>
    </citation>
    <scope>FUNCTION</scope>
</reference>
<reference key="15">
    <citation type="journal article" date="2017" name="Sci. Rep.">
        <title>5-LO inhibition ameliorates palmitic acid-induced ER stress, oxidative stress and insulin resistance via AMPK activation in murine myotubes.</title>
        <authorList>
            <person name="Kwak H.J."/>
            <person name="Choi H.E."/>
            <person name="Cheon H.G."/>
        </authorList>
    </citation>
    <scope>FUNCTION</scope>
</reference>
<reference key="16">
    <citation type="journal article" date="2018" name="Clin. Immunol.">
        <title>The inhibition of 5-Lipoxygenase (5-LO) products leukotriene B4 (LTB4) and cysteinyl leukotrienes (cysLTs) modulates the inflammatory response and improves cutaneous wound healing.</title>
        <authorList>
            <person name="Guimaraes F.R."/>
            <person name="Sales-Campos H."/>
            <person name="Nardini V."/>
            <person name="da Costa T.A."/>
            <person name="Fonseca M.T.C."/>
            <person name="Junior V.R."/>
            <person name="Sorgi C.A."/>
            <person name="da Silva J.S."/>
            <person name="Chica J.E.L."/>
            <person name="Faccioli L.H."/>
            <person name="de Barros Cardoso C.R."/>
        </authorList>
    </citation>
    <scope>FUNCTION</scope>
</reference>
<reference key="17">
    <citation type="journal article" date="2020" name="Antioxid. Redox Signal.">
        <title>Functional Characterization of Knock-In Mice Expressing a 12/15-Lipoxygenating Alox5 Mutant Instead of the 5-Lipoxygenating Wild-Type Enzyme.</title>
        <authorList>
            <person name="Marbach-Breitrueck E."/>
            <person name="Kutzner L."/>
            <person name="Rothe M."/>
            <person name="Gurke R."/>
            <person name="Schreiber Y."/>
            <person name="Reddanna P."/>
            <person name="Schebb N.H."/>
            <person name="Stehling S."/>
            <person name="Wieler L.H."/>
            <person name="Heydeck D."/>
            <person name="Kuhn H."/>
        </authorList>
    </citation>
    <scope>MUTAGENESIS OF PHE-360; ALA-425 AND ASN-426</scope>
    <scope>CATALYTIC ACTIVITY</scope>
    <scope>FUNCTION</scope>
</reference>
<dbReference type="EC" id="1.13.11.-" evidence="2"/>
<dbReference type="EC" id="1.13.11.34" evidence="15"/>
<dbReference type="EMBL" id="L42198">
    <property type="protein sequence ID" value="AAC37673.1"/>
    <property type="molecule type" value="mRNA"/>
</dbReference>
<dbReference type="EMBL" id="AK137481">
    <property type="protein sequence ID" value="BAE23373.1"/>
    <property type="molecule type" value="mRNA"/>
</dbReference>
<dbReference type="EMBL" id="AK171413">
    <property type="protein sequence ID" value="BAE42439.1"/>
    <property type="molecule type" value="mRNA"/>
</dbReference>
<dbReference type="EMBL" id="BC139102">
    <property type="protein sequence ID" value="AAI39103.1"/>
    <property type="molecule type" value="mRNA"/>
</dbReference>
<dbReference type="EMBL" id="BC141213">
    <property type="protein sequence ID" value="AAI41214.1"/>
    <property type="molecule type" value="mRNA"/>
</dbReference>
<dbReference type="CCDS" id="CCDS20452.1"/>
<dbReference type="PIR" id="I49479">
    <property type="entry name" value="I49479"/>
</dbReference>
<dbReference type="RefSeq" id="NP_033792.1">
    <property type="nucleotide sequence ID" value="NM_009662.2"/>
</dbReference>
<dbReference type="SMR" id="P48999"/>
<dbReference type="BioGRID" id="198076">
    <property type="interactions" value="4"/>
</dbReference>
<dbReference type="FunCoup" id="P48999">
    <property type="interactions" value="485"/>
</dbReference>
<dbReference type="STRING" id="10090.ENSMUSP00000026795"/>
<dbReference type="BindingDB" id="P48999"/>
<dbReference type="ChEMBL" id="CHEMBL5211"/>
<dbReference type="DrugCentral" id="P48999"/>
<dbReference type="iPTMnet" id="P48999"/>
<dbReference type="PhosphoSitePlus" id="P48999"/>
<dbReference type="PaxDb" id="10090-ENSMUSP00000026795"/>
<dbReference type="PeptideAtlas" id="P48999"/>
<dbReference type="ProteomicsDB" id="252484"/>
<dbReference type="Antibodypedia" id="3906">
    <property type="antibodies" value="794 antibodies from 44 providers"/>
</dbReference>
<dbReference type="Ensembl" id="ENSMUST00000026795.13">
    <property type="protein sequence ID" value="ENSMUSP00000026795.7"/>
    <property type="gene ID" value="ENSMUSG00000025701.13"/>
</dbReference>
<dbReference type="GeneID" id="11689"/>
<dbReference type="KEGG" id="mmu:11689"/>
<dbReference type="UCSC" id="uc009dkd.1">
    <property type="organism name" value="mouse"/>
</dbReference>
<dbReference type="AGR" id="MGI:87999"/>
<dbReference type="CTD" id="240"/>
<dbReference type="MGI" id="MGI:87999">
    <property type="gene designation" value="Alox5"/>
</dbReference>
<dbReference type="VEuPathDB" id="HostDB:ENSMUSG00000025701"/>
<dbReference type="eggNOG" id="ENOG502QQSP">
    <property type="taxonomic scope" value="Eukaryota"/>
</dbReference>
<dbReference type="GeneTree" id="ENSGT00940000156111"/>
<dbReference type="InParanoid" id="P48999"/>
<dbReference type="OMA" id="MMFNAND"/>
<dbReference type="OrthoDB" id="407298at2759"/>
<dbReference type="PhylomeDB" id="P48999"/>
<dbReference type="TreeFam" id="TF105320"/>
<dbReference type="BRENDA" id="1.13.11.34">
    <property type="organism ID" value="3474"/>
</dbReference>
<dbReference type="Reactome" id="R-MMU-2142688">
    <property type="pathway name" value="Synthesis of 5-eicosatetraenoic acids"/>
</dbReference>
<dbReference type="Reactome" id="R-MMU-2142691">
    <property type="pathway name" value="Synthesis of Leukotrienes (LT) and Eoxins (EX)"/>
</dbReference>
<dbReference type="Reactome" id="R-MMU-2142700">
    <property type="pathway name" value="Biosynthesis of Lipoxins (LX)"/>
</dbReference>
<dbReference type="Reactome" id="R-MMU-6798695">
    <property type="pathway name" value="Neutrophil degranulation"/>
</dbReference>
<dbReference type="Reactome" id="R-MMU-9018676">
    <property type="pathway name" value="Biosynthesis of D-series resolvins"/>
</dbReference>
<dbReference type="Reactome" id="R-MMU-9018682">
    <property type="pathway name" value="Biosynthesis of maresins"/>
</dbReference>
<dbReference type="Reactome" id="R-MMU-9018896">
    <property type="pathway name" value="Biosynthesis of E-series 18(S)-resolvins"/>
</dbReference>
<dbReference type="Reactome" id="R-MMU-9020265">
    <property type="pathway name" value="Biosynthesis of aspirin-triggered D-series resolvins"/>
</dbReference>
<dbReference type="Reactome" id="R-MMU-9023661">
    <property type="pathway name" value="Biosynthesis of E-series 18(R)-resolvins"/>
</dbReference>
<dbReference type="Reactome" id="R-MMU-9026286">
    <property type="pathway name" value="Biosynthesis of DPAn-3-derived protectins and resolvins"/>
</dbReference>
<dbReference type="Reactome" id="R-MMU-9026290">
    <property type="pathway name" value="Biosynthesis of DPAn-3-derived maresins"/>
</dbReference>
<dbReference type="Reactome" id="R-MMU-9026403">
    <property type="pathway name" value="Biosynthesis of DPAn-3-derived 13-series resolvins"/>
</dbReference>
<dbReference type="Reactome" id="R-MMU-9027604">
    <property type="pathway name" value="Biosynthesis of electrophilic Omega-3 PUFA oxo-derivatives"/>
</dbReference>
<dbReference type="UniPathway" id="UPA00877"/>
<dbReference type="BioGRID-ORCS" id="11689">
    <property type="hits" value="3 hits in 81 CRISPR screens"/>
</dbReference>
<dbReference type="ChiTaRS" id="Alox5">
    <property type="organism name" value="mouse"/>
</dbReference>
<dbReference type="PRO" id="PR:P48999"/>
<dbReference type="Proteomes" id="UP000000589">
    <property type="component" value="Chromosome 6"/>
</dbReference>
<dbReference type="RNAct" id="P48999">
    <property type="molecule type" value="protein"/>
</dbReference>
<dbReference type="Bgee" id="ENSMUSG00000025701">
    <property type="expression patterns" value="Expressed in granulocyte and 99 other cell types or tissues"/>
</dbReference>
<dbReference type="ExpressionAtlas" id="P48999">
    <property type="expression patterns" value="baseline and differential"/>
</dbReference>
<dbReference type="GO" id="GO:0005737">
    <property type="term" value="C:cytoplasm"/>
    <property type="evidence" value="ECO:0000314"/>
    <property type="project" value="MGI"/>
</dbReference>
<dbReference type="GO" id="GO:0005829">
    <property type="term" value="C:cytosol"/>
    <property type="evidence" value="ECO:0000250"/>
    <property type="project" value="UniProtKB"/>
</dbReference>
<dbReference type="GO" id="GO:0005641">
    <property type="term" value="C:nuclear envelope lumen"/>
    <property type="evidence" value="ECO:0000250"/>
    <property type="project" value="UniProtKB"/>
</dbReference>
<dbReference type="GO" id="GO:0016363">
    <property type="term" value="C:nuclear matrix"/>
    <property type="evidence" value="ECO:0007669"/>
    <property type="project" value="UniProtKB-SubCell"/>
</dbReference>
<dbReference type="GO" id="GO:0031965">
    <property type="term" value="C:nuclear membrane"/>
    <property type="evidence" value="ECO:0000250"/>
    <property type="project" value="UniProtKB"/>
</dbReference>
<dbReference type="GO" id="GO:0005654">
    <property type="term" value="C:nucleoplasm"/>
    <property type="evidence" value="ECO:0007669"/>
    <property type="project" value="Ensembl"/>
</dbReference>
<dbReference type="GO" id="GO:0005634">
    <property type="term" value="C:nucleus"/>
    <property type="evidence" value="ECO:0000314"/>
    <property type="project" value="MGI"/>
</dbReference>
<dbReference type="GO" id="GO:0048471">
    <property type="term" value="C:perinuclear region of cytoplasm"/>
    <property type="evidence" value="ECO:0000250"/>
    <property type="project" value="UniProtKB"/>
</dbReference>
<dbReference type="GO" id="GO:0004052">
    <property type="term" value="F:arachidonate 12(S)-lipoxygenase activity"/>
    <property type="evidence" value="ECO:0007669"/>
    <property type="project" value="RHEA"/>
</dbReference>
<dbReference type="GO" id="GO:0004051">
    <property type="term" value="F:arachidonate 5-lipoxygenase activity"/>
    <property type="evidence" value="ECO:0000314"/>
    <property type="project" value="UniProtKB"/>
</dbReference>
<dbReference type="GO" id="GO:0036403">
    <property type="term" value="F:arachidonate 8(S)-lipoxygenase activity"/>
    <property type="evidence" value="ECO:0007669"/>
    <property type="project" value="RHEA"/>
</dbReference>
<dbReference type="GO" id="GO:0016787">
    <property type="term" value="F:hydrolase activity"/>
    <property type="evidence" value="ECO:0007669"/>
    <property type="project" value="UniProtKB-KW"/>
</dbReference>
<dbReference type="GO" id="GO:0005506">
    <property type="term" value="F:iron ion binding"/>
    <property type="evidence" value="ECO:0000250"/>
    <property type="project" value="UniProtKB"/>
</dbReference>
<dbReference type="GO" id="GO:0036336">
    <property type="term" value="P:dendritic cell migration"/>
    <property type="evidence" value="ECO:0000315"/>
    <property type="project" value="UniProtKB"/>
</dbReference>
<dbReference type="GO" id="GO:0042593">
    <property type="term" value="P:glucose homeostasis"/>
    <property type="evidence" value="ECO:0000315"/>
    <property type="project" value="UniProtKB"/>
</dbReference>
<dbReference type="GO" id="GO:0006959">
    <property type="term" value="P:humoral immune response"/>
    <property type="evidence" value="ECO:0000315"/>
    <property type="project" value="UniProtKB"/>
</dbReference>
<dbReference type="GO" id="GO:0006954">
    <property type="term" value="P:inflammatory response"/>
    <property type="evidence" value="ECO:0000315"/>
    <property type="project" value="MGI"/>
</dbReference>
<dbReference type="GO" id="GO:0002232">
    <property type="term" value="P:leukocyte chemotaxis involved in inflammatory response"/>
    <property type="evidence" value="ECO:0000250"/>
    <property type="project" value="UniProtKB"/>
</dbReference>
<dbReference type="GO" id="GO:0002523">
    <property type="term" value="P:leukocyte migration involved in inflammatory response"/>
    <property type="evidence" value="ECO:0000315"/>
    <property type="project" value="UniProtKB"/>
</dbReference>
<dbReference type="GO" id="GO:1901753">
    <property type="term" value="P:leukotriene A4 biosynthetic process"/>
    <property type="evidence" value="ECO:0000315"/>
    <property type="project" value="UniProtKB"/>
</dbReference>
<dbReference type="GO" id="GO:0019370">
    <property type="term" value="P:leukotriene biosynthetic process"/>
    <property type="evidence" value="ECO:0000314"/>
    <property type="project" value="MGI"/>
</dbReference>
<dbReference type="GO" id="GO:0006691">
    <property type="term" value="P:leukotriene metabolic process"/>
    <property type="evidence" value="ECO:0000315"/>
    <property type="project" value="MGI"/>
</dbReference>
<dbReference type="GO" id="GO:0002540">
    <property type="term" value="P:leukotriene production involved in inflammatory response"/>
    <property type="evidence" value="ECO:0000315"/>
    <property type="project" value="MGI"/>
</dbReference>
<dbReference type="GO" id="GO:0034440">
    <property type="term" value="P:lipid oxidation"/>
    <property type="evidence" value="ECO:0007669"/>
    <property type="project" value="InterPro"/>
</dbReference>
<dbReference type="GO" id="GO:2001301">
    <property type="term" value="P:lipoxin biosynthetic process"/>
    <property type="evidence" value="ECO:0000250"/>
    <property type="project" value="UniProtKB"/>
</dbReference>
<dbReference type="GO" id="GO:0016525">
    <property type="term" value="P:negative regulation of angiogenesis"/>
    <property type="evidence" value="ECO:0000315"/>
    <property type="project" value="UniProtKB"/>
</dbReference>
<dbReference type="GO" id="GO:0001937">
    <property type="term" value="P:negative regulation of endothelial cell proliferation"/>
    <property type="evidence" value="ECO:0000315"/>
    <property type="project" value="UniProtKB"/>
</dbReference>
<dbReference type="GO" id="GO:0050728">
    <property type="term" value="P:negative regulation of inflammatory response"/>
    <property type="evidence" value="ECO:0000250"/>
    <property type="project" value="UniProtKB"/>
</dbReference>
<dbReference type="GO" id="GO:1903573">
    <property type="term" value="P:negative regulation of response to endoplasmic reticulum stress"/>
    <property type="evidence" value="ECO:0000315"/>
    <property type="project" value="UniProtKB"/>
</dbReference>
<dbReference type="GO" id="GO:1903671">
    <property type="term" value="P:negative regulation of sprouting angiogenesis"/>
    <property type="evidence" value="ECO:0000315"/>
    <property type="project" value="UniProtKB"/>
</dbReference>
<dbReference type="GO" id="GO:0061044">
    <property type="term" value="P:negative regulation of vascular wound healing"/>
    <property type="evidence" value="ECO:0000315"/>
    <property type="project" value="UniProtKB"/>
</dbReference>
<dbReference type="GO" id="GO:0061045">
    <property type="term" value="P:negative regulation of wound healing"/>
    <property type="evidence" value="ECO:0000315"/>
    <property type="project" value="UniProtKB"/>
</dbReference>
<dbReference type="GO" id="GO:0030501">
    <property type="term" value="P:positive regulation of bone mineralization"/>
    <property type="evidence" value="ECO:0000315"/>
    <property type="project" value="UniProtKB"/>
</dbReference>
<dbReference type="GO" id="GO:1904999">
    <property type="term" value="P:positive regulation of leukocyte adhesion to arterial endothelial cell"/>
    <property type="evidence" value="ECO:0000315"/>
    <property type="project" value="UniProtKB"/>
</dbReference>
<dbReference type="GO" id="GO:1900407">
    <property type="term" value="P:regulation of cellular response to oxidative stress"/>
    <property type="evidence" value="ECO:0000315"/>
    <property type="project" value="UniProtKB"/>
</dbReference>
<dbReference type="GO" id="GO:1900015">
    <property type="term" value="P:regulation of cytokine production involved in inflammatory response"/>
    <property type="evidence" value="ECO:0000315"/>
    <property type="project" value="UniProtKB"/>
</dbReference>
<dbReference type="GO" id="GO:0045598">
    <property type="term" value="P:regulation of fat cell differentiation"/>
    <property type="evidence" value="ECO:0000315"/>
    <property type="project" value="UniProtKB"/>
</dbReference>
<dbReference type="GO" id="GO:0050727">
    <property type="term" value="P:regulation of inflammatory response"/>
    <property type="evidence" value="ECO:0000315"/>
    <property type="project" value="UniProtKB"/>
</dbReference>
<dbReference type="GO" id="GO:0106014">
    <property type="term" value="P:regulation of inflammatory response to wounding"/>
    <property type="evidence" value="ECO:0000315"/>
    <property type="project" value="UniProtKB"/>
</dbReference>
<dbReference type="GO" id="GO:0050796">
    <property type="term" value="P:regulation of insulin secretion"/>
    <property type="evidence" value="ECO:0000315"/>
    <property type="project" value="UniProtKB"/>
</dbReference>
<dbReference type="GO" id="GO:1903426">
    <property type="term" value="P:regulation of reactive oxygen species biosynthetic process"/>
    <property type="evidence" value="ECO:0000250"/>
    <property type="project" value="UniProtKB"/>
</dbReference>
<dbReference type="CDD" id="cd01753">
    <property type="entry name" value="PLAT_LOX"/>
    <property type="match status" value="1"/>
</dbReference>
<dbReference type="FunFam" id="1.20.245.10:FF:000001">
    <property type="entry name" value="Arachidonate 5-lipoxygenase a"/>
    <property type="match status" value="1"/>
</dbReference>
<dbReference type="FunFam" id="2.60.60.20:FF:000002">
    <property type="entry name" value="Arachidonate 5-lipoxygenase a"/>
    <property type="match status" value="1"/>
</dbReference>
<dbReference type="FunFam" id="3.10.450.60:FF:000003">
    <property type="entry name" value="Arachidonate 5-lipoxygenase a"/>
    <property type="match status" value="1"/>
</dbReference>
<dbReference type="Gene3D" id="3.10.450.60">
    <property type="match status" value="1"/>
</dbReference>
<dbReference type="Gene3D" id="1.20.245.10">
    <property type="entry name" value="Lipoxygenase-1, Domain 5"/>
    <property type="match status" value="1"/>
</dbReference>
<dbReference type="Gene3D" id="2.60.60.20">
    <property type="entry name" value="PLAT/LH2 domain"/>
    <property type="match status" value="1"/>
</dbReference>
<dbReference type="InterPro" id="IPR000907">
    <property type="entry name" value="LipOase"/>
</dbReference>
<dbReference type="InterPro" id="IPR013819">
    <property type="entry name" value="LipOase_C"/>
</dbReference>
<dbReference type="InterPro" id="IPR036226">
    <property type="entry name" value="LipOase_C_sf"/>
</dbReference>
<dbReference type="InterPro" id="IPR020834">
    <property type="entry name" value="LipOase_CS"/>
</dbReference>
<dbReference type="InterPro" id="IPR020833">
    <property type="entry name" value="LipOase_Fe_BS"/>
</dbReference>
<dbReference type="InterPro" id="IPR001885">
    <property type="entry name" value="LipOase_mml"/>
</dbReference>
<dbReference type="InterPro" id="IPR001024">
    <property type="entry name" value="PLAT/LH2_dom"/>
</dbReference>
<dbReference type="InterPro" id="IPR036392">
    <property type="entry name" value="PLAT/LH2_dom_sf"/>
</dbReference>
<dbReference type="InterPro" id="IPR042062">
    <property type="entry name" value="PLAT_LOX_verte"/>
</dbReference>
<dbReference type="PANTHER" id="PTHR11771">
    <property type="entry name" value="LIPOXYGENASE"/>
    <property type="match status" value="1"/>
</dbReference>
<dbReference type="Pfam" id="PF00305">
    <property type="entry name" value="Lipoxygenase"/>
    <property type="match status" value="1"/>
</dbReference>
<dbReference type="Pfam" id="PF01477">
    <property type="entry name" value="PLAT"/>
    <property type="match status" value="1"/>
</dbReference>
<dbReference type="PRINTS" id="PR00087">
    <property type="entry name" value="LIPOXYGENASE"/>
</dbReference>
<dbReference type="PRINTS" id="PR00467">
    <property type="entry name" value="MAMLPOXGNASE"/>
</dbReference>
<dbReference type="SMART" id="SM00308">
    <property type="entry name" value="LH2"/>
    <property type="match status" value="1"/>
</dbReference>
<dbReference type="SUPFAM" id="SSF49723">
    <property type="entry name" value="Lipase/lipooxygenase domain (PLAT/LH2 domain)"/>
    <property type="match status" value="1"/>
</dbReference>
<dbReference type="SUPFAM" id="SSF48484">
    <property type="entry name" value="Lipoxigenase"/>
    <property type="match status" value="1"/>
</dbReference>
<dbReference type="PROSITE" id="PS00711">
    <property type="entry name" value="LIPOXYGENASE_1"/>
    <property type="match status" value="1"/>
</dbReference>
<dbReference type="PROSITE" id="PS00081">
    <property type="entry name" value="LIPOXYGENASE_2"/>
    <property type="match status" value="1"/>
</dbReference>
<dbReference type="PROSITE" id="PS51393">
    <property type="entry name" value="LIPOXYGENASE_3"/>
    <property type="match status" value="1"/>
</dbReference>
<dbReference type="PROSITE" id="PS50095">
    <property type="entry name" value="PLAT"/>
    <property type="match status" value="1"/>
</dbReference>
<evidence type="ECO:0000250" key="1"/>
<evidence type="ECO:0000250" key="2">
    <source>
        <dbReference type="UniProtKB" id="P09917"/>
    </source>
</evidence>
<evidence type="ECO:0000255" key="3">
    <source>
        <dbReference type="PROSITE-ProRule" id="PRU00152"/>
    </source>
</evidence>
<evidence type="ECO:0000255" key="4">
    <source>
        <dbReference type="PROSITE-ProRule" id="PRU00726"/>
    </source>
</evidence>
<evidence type="ECO:0000269" key="5">
    <source>
    </source>
</evidence>
<evidence type="ECO:0000269" key="6">
    <source>
    </source>
</evidence>
<evidence type="ECO:0000269" key="7">
    <source>
    </source>
</evidence>
<evidence type="ECO:0000269" key="8">
    <source>
    </source>
</evidence>
<evidence type="ECO:0000269" key="9">
    <source>
    </source>
</evidence>
<evidence type="ECO:0000269" key="10">
    <source>
    </source>
</evidence>
<evidence type="ECO:0000269" key="11">
    <source>
    </source>
</evidence>
<evidence type="ECO:0000269" key="12">
    <source>
    </source>
</evidence>
<evidence type="ECO:0000269" key="13">
    <source>
    </source>
</evidence>
<evidence type="ECO:0000269" key="14">
    <source>
    </source>
</evidence>
<evidence type="ECO:0000269" key="15">
    <source>
    </source>
</evidence>
<evidence type="ECO:0000269" key="16">
    <source>
    </source>
</evidence>
<evidence type="ECO:0000269" key="17">
    <source>
    </source>
</evidence>
<evidence type="ECO:0000269" key="18">
    <source>
    </source>
</evidence>
<evidence type="ECO:0000303" key="19">
    <source>
    </source>
</evidence>
<evidence type="ECO:0000305" key="20"/>
<evidence type="ECO:0000305" key="21">
    <source>
    </source>
</evidence>
<evidence type="ECO:0000312" key="22">
    <source>
        <dbReference type="MGI" id="MGI:87999"/>
    </source>
</evidence>
<accession>P48999</accession>
<accession>Q3TB75</accession>
<protein>
    <recommendedName>
        <fullName evidence="20">Polyunsaturated fatty acid 5-lipoxygenase</fullName>
        <ecNumber evidence="2">1.13.11.-</ecNumber>
    </recommendedName>
    <alternativeName>
        <fullName>Arachidonate 5-lipoxygenase</fullName>
        <shortName evidence="2">5-LO</shortName>
        <shortName evidence="19">5-lipoxygenase</shortName>
        <ecNumber evidence="15">1.13.11.34</ecNumber>
    </alternativeName>
</protein>
<keyword id="KW-0106">Calcium</keyword>
<keyword id="KW-0963">Cytoplasm</keyword>
<keyword id="KW-0223">Dioxygenase</keyword>
<keyword id="KW-0378">Hydrolase</keyword>
<keyword id="KW-0408">Iron</keyword>
<keyword id="KW-0434">Leukotriene biosynthesis</keyword>
<keyword id="KW-0443">Lipid metabolism</keyword>
<keyword id="KW-0472">Membrane</keyword>
<keyword id="KW-0479">Metal-binding</keyword>
<keyword id="KW-0539">Nucleus</keyword>
<keyword id="KW-0560">Oxidoreductase</keyword>
<keyword id="KW-0597">Phosphoprotein</keyword>
<keyword id="KW-1185">Reference proteome</keyword>
<name>LOX5_MOUSE</name>